<gene>
    <name type="ordered locus">At1g23970</name>
    <name type="ORF">T23E23.26</name>
</gene>
<feature type="chain" id="PRO_0000363126" description="UPF0725 protein At1g23970">
    <location>
        <begin position="1"/>
        <end position="378"/>
    </location>
</feature>
<feature type="splice variant" id="VSP_036247" description="In isoform 2." evidence="1">
    <location>
        <begin position="149"/>
        <end position="153"/>
    </location>
</feature>
<feature type="sequence conflict" description="In Ref. 4; AAM65653." evidence="2" ref="4">
    <original>T</original>
    <variation>S</variation>
    <location>
        <position position="134"/>
    </location>
</feature>
<feature type="sequence conflict" description="In Ref. 4; AAM65653." evidence="2" ref="4">
    <original>D</original>
    <variation>G</variation>
    <location>
        <position position="342"/>
    </location>
</feature>
<proteinExistence type="evidence at transcript level"/>
<reference key="1">
    <citation type="journal article" date="2000" name="Nature">
        <title>Sequence and analysis of chromosome 1 of the plant Arabidopsis thaliana.</title>
        <authorList>
            <person name="Theologis A."/>
            <person name="Ecker J.R."/>
            <person name="Palm C.J."/>
            <person name="Federspiel N.A."/>
            <person name="Kaul S."/>
            <person name="White O."/>
            <person name="Alonso J."/>
            <person name="Altafi H."/>
            <person name="Araujo R."/>
            <person name="Bowman C.L."/>
            <person name="Brooks S.Y."/>
            <person name="Buehler E."/>
            <person name="Chan A."/>
            <person name="Chao Q."/>
            <person name="Chen H."/>
            <person name="Cheuk R.F."/>
            <person name="Chin C.W."/>
            <person name="Chung M.K."/>
            <person name="Conn L."/>
            <person name="Conway A.B."/>
            <person name="Conway A.R."/>
            <person name="Creasy T.H."/>
            <person name="Dewar K."/>
            <person name="Dunn P."/>
            <person name="Etgu P."/>
            <person name="Feldblyum T.V."/>
            <person name="Feng J.-D."/>
            <person name="Fong B."/>
            <person name="Fujii C.Y."/>
            <person name="Gill J.E."/>
            <person name="Goldsmith A.D."/>
            <person name="Haas B."/>
            <person name="Hansen N.F."/>
            <person name="Hughes B."/>
            <person name="Huizar L."/>
            <person name="Hunter J.L."/>
            <person name="Jenkins J."/>
            <person name="Johnson-Hopson C."/>
            <person name="Khan S."/>
            <person name="Khaykin E."/>
            <person name="Kim C.J."/>
            <person name="Koo H.L."/>
            <person name="Kremenetskaia I."/>
            <person name="Kurtz D.B."/>
            <person name="Kwan A."/>
            <person name="Lam B."/>
            <person name="Langin-Hooper S."/>
            <person name="Lee A."/>
            <person name="Lee J.M."/>
            <person name="Lenz C.A."/>
            <person name="Li J.H."/>
            <person name="Li Y.-P."/>
            <person name="Lin X."/>
            <person name="Liu S.X."/>
            <person name="Liu Z.A."/>
            <person name="Luros J.S."/>
            <person name="Maiti R."/>
            <person name="Marziali A."/>
            <person name="Militscher J."/>
            <person name="Miranda M."/>
            <person name="Nguyen M."/>
            <person name="Nierman W.C."/>
            <person name="Osborne B.I."/>
            <person name="Pai G."/>
            <person name="Peterson J."/>
            <person name="Pham P.K."/>
            <person name="Rizzo M."/>
            <person name="Rooney T."/>
            <person name="Rowley D."/>
            <person name="Sakano H."/>
            <person name="Salzberg S.L."/>
            <person name="Schwartz J.R."/>
            <person name="Shinn P."/>
            <person name="Southwick A.M."/>
            <person name="Sun H."/>
            <person name="Tallon L.J."/>
            <person name="Tambunga G."/>
            <person name="Toriumi M.J."/>
            <person name="Town C.D."/>
            <person name="Utterback T."/>
            <person name="Van Aken S."/>
            <person name="Vaysberg M."/>
            <person name="Vysotskaia V.S."/>
            <person name="Walker M."/>
            <person name="Wu D."/>
            <person name="Yu G."/>
            <person name="Fraser C.M."/>
            <person name="Venter J.C."/>
            <person name="Davis R.W."/>
        </authorList>
    </citation>
    <scope>NUCLEOTIDE SEQUENCE [LARGE SCALE GENOMIC DNA]</scope>
    <source>
        <strain>cv. Columbia</strain>
    </source>
</reference>
<reference key="2">
    <citation type="journal article" date="2017" name="Plant J.">
        <title>Araport11: a complete reannotation of the Arabidopsis thaliana reference genome.</title>
        <authorList>
            <person name="Cheng C.Y."/>
            <person name="Krishnakumar V."/>
            <person name="Chan A.P."/>
            <person name="Thibaud-Nissen F."/>
            <person name="Schobel S."/>
            <person name="Town C.D."/>
        </authorList>
    </citation>
    <scope>GENOME REANNOTATION</scope>
    <source>
        <strain>cv. Columbia</strain>
    </source>
</reference>
<reference key="3">
    <citation type="journal article" date="2003" name="Science">
        <title>Empirical analysis of transcriptional activity in the Arabidopsis genome.</title>
        <authorList>
            <person name="Yamada K."/>
            <person name="Lim J."/>
            <person name="Dale J.M."/>
            <person name="Chen H."/>
            <person name="Shinn P."/>
            <person name="Palm C.J."/>
            <person name="Southwick A.M."/>
            <person name="Wu H.C."/>
            <person name="Kim C.J."/>
            <person name="Nguyen M."/>
            <person name="Pham P.K."/>
            <person name="Cheuk R.F."/>
            <person name="Karlin-Newmann G."/>
            <person name="Liu S.X."/>
            <person name="Lam B."/>
            <person name="Sakano H."/>
            <person name="Wu T."/>
            <person name="Yu G."/>
            <person name="Miranda M."/>
            <person name="Quach H.L."/>
            <person name="Tripp M."/>
            <person name="Chang C.H."/>
            <person name="Lee J.M."/>
            <person name="Toriumi M.J."/>
            <person name="Chan M.M."/>
            <person name="Tang C.C."/>
            <person name="Onodera C.S."/>
            <person name="Deng J.M."/>
            <person name="Akiyama K."/>
            <person name="Ansari Y."/>
            <person name="Arakawa T."/>
            <person name="Banh J."/>
            <person name="Banno F."/>
            <person name="Bowser L."/>
            <person name="Brooks S.Y."/>
            <person name="Carninci P."/>
            <person name="Chao Q."/>
            <person name="Choy N."/>
            <person name="Enju A."/>
            <person name="Goldsmith A.D."/>
            <person name="Gurjal M."/>
            <person name="Hansen N.F."/>
            <person name="Hayashizaki Y."/>
            <person name="Johnson-Hopson C."/>
            <person name="Hsuan V.W."/>
            <person name="Iida K."/>
            <person name="Karnes M."/>
            <person name="Khan S."/>
            <person name="Koesema E."/>
            <person name="Ishida J."/>
            <person name="Jiang P.X."/>
            <person name="Jones T."/>
            <person name="Kawai J."/>
            <person name="Kamiya A."/>
            <person name="Meyers C."/>
            <person name="Nakajima M."/>
            <person name="Narusaka M."/>
            <person name="Seki M."/>
            <person name="Sakurai T."/>
            <person name="Satou M."/>
            <person name="Tamse R."/>
            <person name="Vaysberg M."/>
            <person name="Wallender E.K."/>
            <person name="Wong C."/>
            <person name="Yamamura Y."/>
            <person name="Yuan S."/>
            <person name="Shinozaki K."/>
            <person name="Davis R.W."/>
            <person name="Theologis A."/>
            <person name="Ecker J.R."/>
        </authorList>
    </citation>
    <scope>NUCLEOTIDE SEQUENCE [LARGE SCALE MRNA] (ISOFORM 1)</scope>
    <source>
        <strain>cv. Columbia</strain>
    </source>
</reference>
<reference key="4">
    <citation type="submission" date="2002-03" db="EMBL/GenBank/DDBJ databases">
        <title>Full-length cDNA from Arabidopsis thaliana.</title>
        <authorList>
            <person name="Brover V.V."/>
            <person name="Troukhan M.E."/>
            <person name="Alexandrov N.A."/>
            <person name="Lu Y.-P."/>
            <person name="Flavell R.B."/>
            <person name="Feldmann K.A."/>
        </authorList>
    </citation>
    <scope>NUCLEOTIDE SEQUENCE [LARGE SCALE MRNA] (ISOFORM 2)</scope>
</reference>
<comment type="alternative products">
    <event type="alternative splicing"/>
    <isoform>
        <id>Q94A88-1</id>
        <name>1</name>
        <sequence type="displayed"/>
    </isoform>
    <isoform>
        <id>Q94A88-2</id>
        <name>2</name>
        <sequence type="described" ref="VSP_036247"/>
    </isoform>
</comment>
<comment type="miscellaneous">
    <molecule>Isoform 2</molecule>
    <text evidence="2">May be due to a competing donor splice site.</text>
</comment>
<comment type="similarity">
    <text evidence="2">Belongs to the UPF0725 (EMB2204) family.</text>
</comment>
<comment type="sequence caution" evidence="2">
    <conflict type="erroneous gene model prediction">
        <sequence resource="EMBL-CDS" id="AAF87154"/>
    </conflict>
    <text>The predicted gene At1g23960 has been split into 2 genes: At1g23960 and At1g23970.</text>
</comment>
<keyword id="KW-0025">Alternative splicing</keyword>
<keyword id="KW-1185">Reference proteome</keyword>
<organism>
    <name type="scientific">Arabidopsis thaliana</name>
    <name type="common">Mouse-ear cress</name>
    <dbReference type="NCBI Taxonomy" id="3702"/>
    <lineage>
        <taxon>Eukaryota</taxon>
        <taxon>Viridiplantae</taxon>
        <taxon>Streptophyta</taxon>
        <taxon>Embryophyta</taxon>
        <taxon>Tracheophyta</taxon>
        <taxon>Spermatophyta</taxon>
        <taxon>Magnoliopsida</taxon>
        <taxon>eudicotyledons</taxon>
        <taxon>Gunneridae</taxon>
        <taxon>Pentapetalae</taxon>
        <taxon>rosids</taxon>
        <taxon>malvids</taxon>
        <taxon>Brassicales</taxon>
        <taxon>Brassicaceae</taxon>
        <taxon>Camelineae</taxon>
        <taxon>Arabidopsis</taxon>
    </lineage>
</organism>
<sequence>MTTEEESLSAAEEGYNVQRDYWRQAEESDGFDIENIKLPPGMHGRVMGLITYNCQLCYRYPFPVLVKLYAKFGLHRYNLIKGTSFELAALMKFNMLQNYMSSFYMTLLAHDPDPAASSSQKTFQVRVDEQQFGTLGINCSIARPKHEGDLLEVSTKTPFIPHFHGGALGDGIFKGELPDCLSDDALNALMEAVSKDELPEHVLDDALYARAGGIFQGELPDWPSDDALNDGKRFYMLKESEWQATDWISMYLELVITTTDRSITETVQKPEVLSKLEIVKVAIETATKDEEPSNERLKAYRAHFYITFKGLAEPRAPRQVFEIGEHVERQAIVRRVMGHRGDLTLKGKLCGGQYIKRRSLALKSGEESPNCKKQTRVG</sequence>
<dbReference type="EMBL" id="AC002423">
    <property type="protein sequence ID" value="AAF87154.1"/>
    <property type="status" value="ALT_SEQ"/>
    <property type="molecule type" value="Genomic_DNA"/>
</dbReference>
<dbReference type="EMBL" id="CP002684">
    <property type="protein sequence ID" value="AEE30462.1"/>
    <property type="molecule type" value="Genomic_DNA"/>
</dbReference>
<dbReference type="EMBL" id="AY049272">
    <property type="protein sequence ID" value="AAK83614.1"/>
    <property type="molecule type" value="mRNA"/>
</dbReference>
<dbReference type="EMBL" id="AY129495">
    <property type="protein sequence ID" value="AAM91081.1"/>
    <property type="molecule type" value="mRNA"/>
</dbReference>
<dbReference type="EMBL" id="AY088107">
    <property type="protein sequence ID" value="AAM65653.1"/>
    <property type="molecule type" value="mRNA"/>
</dbReference>
<dbReference type="PIR" id="G86373">
    <property type="entry name" value="G86373"/>
</dbReference>
<dbReference type="RefSeq" id="NP_849702.1">
    <molecule id="Q94A88-1"/>
    <property type="nucleotide sequence ID" value="NM_179371.3"/>
</dbReference>
<dbReference type="SMR" id="Q94A88"/>
<dbReference type="FunCoup" id="Q94A88">
    <property type="interactions" value="16"/>
</dbReference>
<dbReference type="STRING" id="3702.Q94A88"/>
<dbReference type="PaxDb" id="3702-AT1G23970.2"/>
<dbReference type="ProteomicsDB" id="243030">
    <molecule id="Q94A88-1"/>
</dbReference>
<dbReference type="DNASU" id="839008"/>
<dbReference type="EnsemblPlants" id="AT1G23970.2">
    <molecule id="Q94A88-1"/>
    <property type="protein sequence ID" value="AT1G23970.2"/>
    <property type="gene ID" value="AT1G23970"/>
</dbReference>
<dbReference type="GeneID" id="839008"/>
<dbReference type="Gramene" id="AT1G23970.2">
    <molecule id="Q94A88-1"/>
    <property type="protein sequence ID" value="AT1G23970.2"/>
    <property type="gene ID" value="AT1G23970"/>
</dbReference>
<dbReference type="KEGG" id="ath:AT1G23970"/>
<dbReference type="Araport" id="AT1G23970"/>
<dbReference type="TAIR" id="AT1G23970"/>
<dbReference type="InParanoid" id="Q94A88"/>
<dbReference type="OMA" id="HCLHIIT"/>
<dbReference type="OrthoDB" id="1102630at2759"/>
<dbReference type="PhylomeDB" id="Q94A88"/>
<dbReference type="PRO" id="PR:Q94A88"/>
<dbReference type="Proteomes" id="UP000006548">
    <property type="component" value="Chromosome 1"/>
</dbReference>
<dbReference type="ExpressionAtlas" id="Q94A88">
    <property type="expression patterns" value="baseline and differential"/>
</dbReference>
<dbReference type="InterPro" id="IPR006462">
    <property type="entry name" value="MS5"/>
</dbReference>
<dbReference type="NCBIfam" id="TIGR01572">
    <property type="entry name" value="A_thl_para_3677"/>
    <property type="match status" value="2"/>
</dbReference>
<dbReference type="PANTHER" id="PTHR31260:SF77">
    <property type="entry name" value="(RAPE) HYPOTHETICAL PROTEIN"/>
    <property type="match status" value="1"/>
</dbReference>
<dbReference type="PANTHER" id="PTHR31260">
    <property type="entry name" value="CYSTATIN/MONELLIN SUPERFAMILY PROTEIN"/>
    <property type="match status" value="1"/>
</dbReference>
<dbReference type="Pfam" id="PF04776">
    <property type="entry name" value="protein_MS5"/>
    <property type="match status" value="1"/>
</dbReference>
<protein>
    <recommendedName>
        <fullName>UPF0725 protein At1g23970</fullName>
    </recommendedName>
</protein>
<name>Y1397_ARATH</name>
<accession>Q94A88</accession>
<accession>Q8LA04</accession>
<accession>Q9LR96</accession>
<evidence type="ECO:0000303" key="1">
    <source ref="4"/>
</evidence>
<evidence type="ECO:0000305" key="2"/>